<reference key="1">
    <citation type="journal article" date="2007" name="PLoS Biol.">
        <title>Evolution of symbiotic bacteria in the distal human intestine.</title>
        <authorList>
            <person name="Xu J."/>
            <person name="Mahowald M.A."/>
            <person name="Ley R.E."/>
            <person name="Lozupone C.A."/>
            <person name="Hamady M."/>
            <person name="Martens E.C."/>
            <person name="Henrissat B."/>
            <person name="Coutinho P.M."/>
            <person name="Minx P."/>
            <person name="Latreille P."/>
            <person name="Cordum H."/>
            <person name="Van Brunt A."/>
            <person name="Kim K."/>
            <person name="Fulton R.S."/>
            <person name="Fulton L.A."/>
            <person name="Clifton S.W."/>
            <person name="Wilson R.K."/>
            <person name="Knight R.D."/>
            <person name="Gordon J.I."/>
        </authorList>
    </citation>
    <scope>NUCLEOTIDE SEQUENCE [LARGE SCALE GENOMIC DNA]</scope>
    <source>
        <strain>ATCC 8503 / DSM 20701 / CIP 104284 / JCM 5825 / NCTC 11152</strain>
    </source>
</reference>
<sequence length="188" mass="20065">MLYIEVLLLAIGLSMDSLAVSVTGGAVLKNNCTAGNIIKIASVLGIFQAGMTVIGYTMGLGFEKYICAFDHWIAFTLLLYLGGKMIYDSTKEEEEDGKFDPLCNRTLCGLGIATSIDALAVGISLAILKSPLLLQASTIGVVTFAISAFGVYFGNRFGKRIDLKLDLIGGLILIGIGTKILIEHLFFS</sequence>
<protein>
    <recommendedName>
        <fullName evidence="1">Putative manganese efflux pump MntP</fullName>
    </recommendedName>
</protein>
<dbReference type="EMBL" id="CP000140">
    <property type="protein sequence ID" value="ABR41963.1"/>
    <property type="molecule type" value="Genomic_DNA"/>
</dbReference>
<dbReference type="RefSeq" id="WP_008780773.1">
    <property type="nucleotide sequence ID" value="NC_009615.1"/>
</dbReference>
<dbReference type="STRING" id="435591.BDI_0173"/>
<dbReference type="PaxDb" id="435591-BDI_0173"/>
<dbReference type="KEGG" id="pdi:BDI_0173"/>
<dbReference type="eggNOG" id="COG1971">
    <property type="taxonomic scope" value="Bacteria"/>
</dbReference>
<dbReference type="HOGENOM" id="CLU_096410_3_0_10"/>
<dbReference type="BioCyc" id="PDIS435591:G1G5A-176-MONOMER"/>
<dbReference type="Proteomes" id="UP000000566">
    <property type="component" value="Chromosome"/>
</dbReference>
<dbReference type="GO" id="GO:0005886">
    <property type="term" value="C:plasma membrane"/>
    <property type="evidence" value="ECO:0007669"/>
    <property type="project" value="UniProtKB-SubCell"/>
</dbReference>
<dbReference type="GO" id="GO:0005384">
    <property type="term" value="F:manganese ion transmembrane transporter activity"/>
    <property type="evidence" value="ECO:0007669"/>
    <property type="project" value="UniProtKB-UniRule"/>
</dbReference>
<dbReference type="HAMAP" id="MF_01521">
    <property type="entry name" value="MntP_pump"/>
    <property type="match status" value="1"/>
</dbReference>
<dbReference type="InterPro" id="IPR003810">
    <property type="entry name" value="Mntp/YtaF"/>
</dbReference>
<dbReference type="InterPro" id="IPR022929">
    <property type="entry name" value="Put_MntP"/>
</dbReference>
<dbReference type="PANTHER" id="PTHR35529">
    <property type="entry name" value="MANGANESE EFFLUX PUMP MNTP-RELATED"/>
    <property type="match status" value="1"/>
</dbReference>
<dbReference type="PANTHER" id="PTHR35529:SF1">
    <property type="entry name" value="MANGANESE EFFLUX PUMP MNTP-RELATED"/>
    <property type="match status" value="1"/>
</dbReference>
<dbReference type="Pfam" id="PF02659">
    <property type="entry name" value="Mntp"/>
    <property type="match status" value="1"/>
</dbReference>
<accession>A6L8E9</accession>
<gene>
    <name evidence="1" type="primary">mntP</name>
    <name type="ordered locus">BDI_0173</name>
</gene>
<evidence type="ECO:0000255" key="1">
    <source>
        <dbReference type="HAMAP-Rule" id="MF_01521"/>
    </source>
</evidence>
<feature type="chain" id="PRO_0000300162" description="Putative manganese efflux pump MntP">
    <location>
        <begin position="1"/>
        <end position="188"/>
    </location>
</feature>
<feature type="transmembrane region" description="Helical" evidence="1">
    <location>
        <begin position="2"/>
        <end position="22"/>
    </location>
</feature>
<feature type="transmembrane region" description="Helical" evidence="1">
    <location>
        <begin position="40"/>
        <end position="60"/>
    </location>
</feature>
<feature type="transmembrane region" description="Helical" evidence="1">
    <location>
        <begin position="66"/>
        <end position="86"/>
    </location>
</feature>
<feature type="transmembrane region" description="Helical" evidence="1">
    <location>
        <begin position="107"/>
        <end position="127"/>
    </location>
</feature>
<feature type="transmembrane region" description="Helical" evidence="1">
    <location>
        <begin position="133"/>
        <end position="153"/>
    </location>
</feature>
<feature type="transmembrane region" description="Helical" evidence="1">
    <location>
        <begin position="167"/>
        <end position="187"/>
    </location>
</feature>
<organism>
    <name type="scientific">Parabacteroides distasonis (strain ATCC 8503 / DSM 20701 / CIP 104284 / JCM 5825 / NCTC 11152)</name>
    <dbReference type="NCBI Taxonomy" id="435591"/>
    <lineage>
        <taxon>Bacteria</taxon>
        <taxon>Pseudomonadati</taxon>
        <taxon>Bacteroidota</taxon>
        <taxon>Bacteroidia</taxon>
        <taxon>Bacteroidales</taxon>
        <taxon>Tannerellaceae</taxon>
        <taxon>Parabacteroides</taxon>
    </lineage>
</organism>
<proteinExistence type="inferred from homology"/>
<comment type="function">
    <text evidence="1">Probably functions as a manganese efflux pump.</text>
</comment>
<comment type="subcellular location">
    <subcellularLocation>
        <location evidence="1">Cell inner membrane</location>
        <topology evidence="1">Multi-pass membrane protein</topology>
    </subcellularLocation>
</comment>
<comment type="similarity">
    <text evidence="1">Belongs to the MntP (TC 9.B.29) family.</text>
</comment>
<keyword id="KW-0997">Cell inner membrane</keyword>
<keyword id="KW-1003">Cell membrane</keyword>
<keyword id="KW-0406">Ion transport</keyword>
<keyword id="KW-0464">Manganese</keyword>
<keyword id="KW-0472">Membrane</keyword>
<keyword id="KW-1185">Reference proteome</keyword>
<keyword id="KW-0812">Transmembrane</keyword>
<keyword id="KW-1133">Transmembrane helix</keyword>
<keyword id="KW-0813">Transport</keyword>
<name>MNTP_PARD8</name>